<feature type="chain" id="PRO_0000365359" description="Eukaryotic translation initiation factor 3 subunit I">
    <location>
        <begin position="1"/>
        <end position="335"/>
    </location>
</feature>
<feature type="repeat" description="WD 1">
    <location>
        <begin position="8"/>
        <end position="47"/>
    </location>
</feature>
<feature type="repeat" description="WD 2">
    <location>
        <begin position="50"/>
        <end position="91"/>
    </location>
</feature>
<feature type="repeat" description="WD 3">
    <location>
        <begin position="145"/>
        <end position="184"/>
    </location>
</feature>
<feature type="repeat" description="WD 4">
    <location>
        <begin position="189"/>
        <end position="228"/>
    </location>
</feature>
<feature type="repeat" description="WD 5">
    <location>
        <begin position="286"/>
        <end position="325"/>
    </location>
</feature>
<organism>
    <name type="scientific">Aspergillus oryzae (strain ATCC 42149 / RIB 40)</name>
    <name type="common">Yellow koji mold</name>
    <dbReference type="NCBI Taxonomy" id="510516"/>
    <lineage>
        <taxon>Eukaryota</taxon>
        <taxon>Fungi</taxon>
        <taxon>Dikarya</taxon>
        <taxon>Ascomycota</taxon>
        <taxon>Pezizomycotina</taxon>
        <taxon>Eurotiomycetes</taxon>
        <taxon>Eurotiomycetidae</taxon>
        <taxon>Eurotiales</taxon>
        <taxon>Aspergillaceae</taxon>
        <taxon>Aspergillus</taxon>
        <taxon>Aspergillus subgen. Circumdati</taxon>
    </lineage>
</organism>
<gene>
    <name type="primary">tif34</name>
    <name type="ORF">AO090005001406</name>
</gene>
<proteinExistence type="inferred from homology"/>
<dbReference type="EMBL" id="BA000049">
    <property type="protein sequence ID" value="BAE56331.1"/>
    <property type="molecule type" value="Genomic_DNA"/>
</dbReference>
<dbReference type="RefSeq" id="XP_001818333.1">
    <property type="nucleotide sequence ID" value="XM_001818281.2"/>
</dbReference>
<dbReference type="SMR" id="Q2UQ34"/>
<dbReference type="STRING" id="510516.Q2UQ34"/>
<dbReference type="EnsemblFungi" id="BAE56331">
    <property type="protein sequence ID" value="BAE56331"/>
    <property type="gene ID" value="AO090005001406"/>
</dbReference>
<dbReference type="GeneID" id="5990278"/>
<dbReference type="KEGG" id="aor:AO090005001406"/>
<dbReference type="VEuPathDB" id="FungiDB:AO090005001406"/>
<dbReference type="HOGENOM" id="CLU_043845_0_1_1"/>
<dbReference type="OMA" id="VWFSHNG"/>
<dbReference type="OrthoDB" id="12186at5052"/>
<dbReference type="Proteomes" id="UP000006564">
    <property type="component" value="Chromosome 1"/>
</dbReference>
<dbReference type="GO" id="GO:0016282">
    <property type="term" value="C:eukaryotic 43S preinitiation complex"/>
    <property type="evidence" value="ECO:0007669"/>
    <property type="project" value="UniProtKB-UniRule"/>
</dbReference>
<dbReference type="GO" id="GO:0033290">
    <property type="term" value="C:eukaryotic 48S preinitiation complex"/>
    <property type="evidence" value="ECO:0007669"/>
    <property type="project" value="UniProtKB-UniRule"/>
</dbReference>
<dbReference type="GO" id="GO:0071540">
    <property type="term" value="C:eukaryotic translation initiation factor 3 complex, eIF3e"/>
    <property type="evidence" value="ECO:0007669"/>
    <property type="project" value="EnsemblFungi"/>
</dbReference>
<dbReference type="GO" id="GO:0071541">
    <property type="term" value="C:eukaryotic translation initiation factor 3 complex, eIF3m"/>
    <property type="evidence" value="ECO:0007669"/>
    <property type="project" value="EnsemblFungi"/>
</dbReference>
<dbReference type="GO" id="GO:0034399">
    <property type="term" value="C:nuclear periphery"/>
    <property type="evidence" value="ECO:0007669"/>
    <property type="project" value="EnsemblFungi"/>
</dbReference>
<dbReference type="GO" id="GO:0003723">
    <property type="term" value="F:RNA binding"/>
    <property type="evidence" value="ECO:0007669"/>
    <property type="project" value="TreeGrafter"/>
</dbReference>
<dbReference type="GO" id="GO:0003743">
    <property type="term" value="F:translation initiation factor activity"/>
    <property type="evidence" value="ECO:0007669"/>
    <property type="project" value="UniProtKB-UniRule"/>
</dbReference>
<dbReference type="GO" id="GO:0001732">
    <property type="term" value="P:formation of cytoplasmic translation initiation complex"/>
    <property type="evidence" value="ECO:0007669"/>
    <property type="project" value="UniProtKB-UniRule"/>
</dbReference>
<dbReference type="FunFam" id="2.130.10.10:FF:000127">
    <property type="entry name" value="Eukaryotic translation initiation factor 3 subunit I"/>
    <property type="match status" value="1"/>
</dbReference>
<dbReference type="Gene3D" id="2.130.10.10">
    <property type="entry name" value="YVTN repeat-like/Quinoprotein amine dehydrogenase"/>
    <property type="match status" value="1"/>
</dbReference>
<dbReference type="HAMAP" id="MF_03008">
    <property type="entry name" value="eIF3i"/>
    <property type="match status" value="1"/>
</dbReference>
<dbReference type="InterPro" id="IPR027525">
    <property type="entry name" value="eIF3i"/>
</dbReference>
<dbReference type="InterPro" id="IPR015943">
    <property type="entry name" value="WD40/YVTN_repeat-like_dom_sf"/>
</dbReference>
<dbReference type="InterPro" id="IPR019775">
    <property type="entry name" value="WD40_repeat_CS"/>
</dbReference>
<dbReference type="InterPro" id="IPR036322">
    <property type="entry name" value="WD40_repeat_dom_sf"/>
</dbReference>
<dbReference type="InterPro" id="IPR001680">
    <property type="entry name" value="WD40_rpt"/>
</dbReference>
<dbReference type="PANTHER" id="PTHR19877">
    <property type="entry name" value="EUKARYOTIC TRANSLATION INITIATION FACTOR 3 SUBUNIT I"/>
    <property type="match status" value="1"/>
</dbReference>
<dbReference type="PANTHER" id="PTHR19877:SF1">
    <property type="entry name" value="EUKARYOTIC TRANSLATION INITIATION FACTOR 3 SUBUNIT I"/>
    <property type="match status" value="1"/>
</dbReference>
<dbReference type="Pfam" id="PF24805">
    <property type="entry name" value="EIF3I"/>
    <property type="match status" value="1"/>
</dbReference>
<dbReference type="SMART" id="SM00320">
    <property type="entry name" value="WD40"/>
    <property type="match status" value="6"/>
</dbReference>
<dbReference type="SUPFAM" id="SSF50978">
    <property type="entry name" value="WD40 repeat-like"/>
    <property type="match status" value="1"/>
</dbReference>
<dbReference type="PROSITE" id="PS00678">
    <property type="entry name" value="WD_REPEATS_1"/>
    <property type="match status" value="1"/>
</dbReference>
<dbReference type="PROSITE" id="PS50082">
    <property type="entry name" value="WD_REPEATS_2"/>
    <property type="match status" value="3"/>
</dbReference>
<dbReference type="PROSITE" id="PS50294">
    <property type="entry name" value="WD_REPEATS_REGION"/>
    <property type="match status" value="1"/>
</dbReference>
<accession>Q2UQ34</accession>
<protein>
    <recommendedName>
        <fullName evidence="1">Eukaryotic translation initiation factor 3 subunit I</fullName>
        <shortName evidence="1">eIF3i</shortName>
    </recommendedName>
    <alternativeName>
        <fullName evidence="1">Eukaryotic translation initiation factor 3 39 kDa subunit homolog</fullName>
        <shortName evidence="1">eIF-3 39 kDa subunit homolog</shortName>
    </alternativeName>
</protein>
<comment type="function">
    <text evidence="1">Component of the eukaryotic translation initiation factor 3 (eIF-3) complex, which is involved in protein synthesis of a specialized repertoire of mRNAs and, together with other initiation factors, stimulates binding of mRNA and methionyl-tRNAi to the 40S ribosome. The eIF-3 complex specifically targets and initiates translation of a subset of mRNAs involved in cell proliferation.</text>
</comment>
<comment type="subunit">
    <text evidence="1">Component of the eukaryotic translation initiation factor 3 (eIF-3) complex.</text>
</comment>
<comment type="subcellular location">
    <subcellularLocation>
        <location evidence="1">Cytoplasm</location>
    </subcellularLocation>
</comment>
<comment type="similarity">
    <text evidence="1">Belongs to the eIF-3 subunit I family.</text>
</comment>
<keyword id="KW-0963">Cytoplasm</keyword>
<keyword id="KW-0396">Initiation factor</keyword>
<keyword id="KW-0648">Protein biosynthesis</keyword>
<keyword id="KW-1185">Reference proteome</keyword>
<keyword id="KW-0677">Repeat</keyword>
<keyword id="KW-0853">WD repeat</keyword>
<sequence>MRPILLSGHERSLNQIKFNRDGDLLFSVAKDKIVCAWWSANGERLGTYNGHQGAIWTVDVSPNTVLLATGSADNTVRLWNVKTGECIKVWDFPTAVKRVEFTPDGSRLLAVTEKRMGFLGTIAVLDINYEDLEAQAEEPSLRITCTESKATVAGWSYLAKYIIAGHEDGSVSQYDSKTGEQLENVQAHEFDNLISDIQFSADRTYFITASKDKSAKLISSRNLAILKTYVADTPLNSAAITPKKEYVILGGGQAAMDVTTTSARQGKFEARFYHKVFEDEIGRVRGHFGPLNTVAVHPNGTAYASGGEDGYVRVHHFDKPYFDFMYEVEREQLRK</sequence>
<reference key="1">
    <citation type="journal article" date="2005" name="Nature">
        <title>Genome sequencing and analysis of Aspergillus oryzae.</title>
        <authorList>
            <person name="Machida M."/>
            <person name="Asai K."/>
            <person name="Sano M."/>
            <person name="Tanaka T."/>
            <person name="Kumagai T."/>
            <person name="Terai G."/>
            <person name="Kusumoto K."/>
            <person name="Arima T."/>
            <person name="Akita O."/>
            <person name="Kashiwagi Y."/>
            <person name="Abe K."/>
            <person name="Gomi K."/>
            <person name="Horiuchi H."/>
            <person name="Kitamoto K."/>
            <person name="Kobayashi T."/>
            <person name="Takeuchi M."/>
            <person name="Denning D.W."/>
            <person name="Galagan J.E."/>
            <person name="Nierman W.C."/>
            <person name="Yu J."/>
            <person name="Archer D.B."/>
            <person name="Bennett J.W."/>
            <person name="Bhatnagar D."/>
            <person name="Cleveland T.E."/>
            <person name="Fedorova N.D."/>
            <person name="Gotoh O."/>
            <person name="Horikawa H."/>
            <person name="Hosoyama A."/>
            <person name="Ichinomiya M."/>
            <person name="Igarashi R."/>
            <person name="Iwashita K."/>
            <person name="Juvvadi P.R."/>
            <person name="Kato M."/>
            <person name="Kato Y."/>
            <person name="Kin T."/>
            <person name="Kokubun A."/>
            <person name="Maeda H."/>
            <person name="Maeyama N."/>
            <person name="Maruyama J."/>
            <person name="Nagasaki H."/>
            <person name="Nakajima T."/>
            <person name="Oda K."/>
            <person name="Okada K."/>
            <person name="Paulsen I."/>
            <person name="Sakamoto K."/>
            <person name="Sawano T."/>
            <person name="Takahashi M."/>
            <person name="Takase K."/>
            <person name="Terabayashi Y."/>
            <person name="Wortman J.R."/>
            <person name="Yamada O."/>
            <person name="Yamagata Y."/>
            <person name="Anazawa H."/>
            <person name="Hata Y."/>
            <person name="Koide Y."/>
            <person name="Komori T."/>
            <person name="Koyama Y."/>
            <person name="Minetoki T."/>
            <person name="Suharnan S."/>
            <person name="Tanaka A."/>
            <person name="Isono K."/>
            <person name="Kuhara S."/>
            <person name="Ogasawara N."/>
            <person name="Kikuchi H."/>
        </authorList>
    </citation>
    <scope>NUCLEOTIDE SEQUENCE [LARGE SCALE GENOMIC DNA]</scope>
    <source>
        <strain>ATCC 42149 / RIB 40</strain>
    </source>
</reference>
<evidence type="ECO:0000255" key="1">
    <source>
        <dbReference type="HAMAP-Rule" id="MF_03008"/>
    </source>
</evidence>
<name>EIF3I_ASPOR</name>